<reference key="1">
    <citation type="journal article" date="2005" name="Nucleic Acids Res.">
        <title>Genome dynamics and diversity of Shigella species, the etiologic agents of bacillary dysentery.</title>
        <authorList>
            <person name="Yang F."/>
            <person name="Yang J."/>
            <person name="Zhang X."/>
            <person name="Chen L."/>
            <person name="Jiang Y."/>
            <person name="Yan Y."/>
            <person name="Tang X."/>
            <person name="Wang J."/>
            <person name="Xiong Z."/>
            <person name="Dong J."/>
            <person name="Xue Y."/>
            <person name="Zhu Y."/>
            <person name="Xu X."/>
            <person name="Sun L."/>
            <person name="Chen S."/>
            <person name="Nie H."/>
            <person name="Peng J."/>
            <person name="Xu J."/>
            <person name="Wang Y."/>
            <person name="Yuan Z."/>
            <person name="Wen Y."/>
            <person name="Yao Z."/>
            <person name="Shen Y."/>
            <person name="Qiang B."/>
            <person name="Hou Y."/>
            <person name="Yu J."/>
            <person name="Jin Q."/>
        </authorList>
    </citation>
    <scope>NUCLEOTIDE SEQUENCE [LARGE SCALE GENOMIC DNA]</scope>
    <source>
        <strain>Sd197</strain>
    </source>
</reference>
<proteinExistence type="inferred from homology"/>
<protein>
    <recommendedName>
        <fullName evidence="1">Cardiolipin synthase A</fullName>
        <shortName evidence="1">CL synthase</shortName>
        <ecNumber evidence="1">2.7.8.-</ecNumber>
    </recommendedName>
</protein>
<dbReference type="EC" id="2.7.8.-" evidence="1"/>
<dbReference type="EMBL" id="CP000034">
    <property type="protein sequence ID" value="ABB61454.1"/>
    <property type="molecule type" value="Genomic_DNA"/>
</dbReference>
<dbReference type="RefSeq" id="WP_000214509.1">
    <property type="nucleotide sequence ID" value="NC_007606.1"/>
</dbReference>
<dbReference type="RefSeq" id="YP_402945.1">
    <property type="nucleotide sequence ID" value="NC_007606.1"/>
</dbReference>
<dbReference type="SMR" id="Q32GV1"/>
<dbReference type="STRING" id="300267.SDY_1307"/>
<dbReference type="EnsemblBacteria" id="ABB61454">
    <property type="protein sequence ID" value="ABB61454"/>
    <property type="gene ID" value="SDY_1307"/>
</dbReference>
<dbReference type="KEGG" id="sdy:SDY_1307"/>
<dbReference type="PATRIC" id="fig|300267.13.peg.1553"/>
<dbReference type="HOGENOM" id="CLU_038053_1_0_6"/>
<dbReference type="Proteomes" id="UP000002716">
    <property type="component" value="Chromosome"/>
</dbReference>
<dbReference type="GO" id="GO:0005886">
    <property type="term" value="C:plasma membrane"/>
    <property type="evidence" value="ECO:0007669"/>
    <property type="project" value="UniProtKB-SubCell"/>
</dbReference>
<dbReference type="GO" id="GO:0008808">
    <property type="term" value="F:cardiolipin synthase activity"/>
    <property type="evidence" value="ECO:0007669"/>
    <property type="project" value="InterPro"/>
</dbReference>
<dbReference type="GO" id="GO:0032049">
    <property type="term" value="P:cardiolipin biosynthetic process"/>
    <property type="evidence" value="ECO:0007669"/>
    <property type="project" value="InterPro"/>
</dbReference>
<dbReference type="CDD" id="cd09152">
    <property type="entry name" value="PLDc_EcCLS_like_1"/>
    <property type="match status" value="1"/>
</dbReference>
<dbReference type="CDD" id="cd09158">
    <property type="entry name" value="PLDc_EcCLS_like_2"/>
    <property type="match status" value="1"/>
</dbReference>
<dbReference type="FunFam" id="3.30.870.10:FF:000002">
    <property type="entry name" value="Cardiolipin synthase A"/>
    <property type="match status" value="1"/>
</dbReference>
<dbReference type="FunFam" id="3.30.870.10:FF:000003">
    <property type="entry name" value="Cardiolipin synthase A"/>
    <property type="match status" value="1"/>
</dbReference>
<dbReference type="Gene3D" id="3.30.870.10">
    <property type="entry name" value="Endonuclease Chain A"/>
    <property type="match status" value="2"/>
</dbReference>
<dbReference type="HAMAP" id="MF_00190">
    <property type="entry name" value="Cardiolipin_synth_ClsA"/>
    <property type="match status" value="1"/>
</dbReference>
<dbReference type="InterPro" id="IPR022924">
    <property type="entry name" value="Cardiolipin_synthase"/>
</dbReference>
<dbReference type="InterPro" id="IPR030840">
    <property type="entry name" value="CL_synthase_A"/>
</dbReference>
<dbReference type="InterPro" id="IPR027379">
    <property type="entry name" value="CLS_N"/>
</dbReference>
<dbReference type="InterPro" id="IPR025202">
    <property type="entry name" value="PLD-like_dom"/>
</dbReference>
<dbReference type="InterPro" id="IPR001736">
    <property type="entry name" value="PLipase_D/transphosphatidylase"/>
</dbReference>
<dbReference type="NCBIfam" id="TIGR04265">
    <property type="entry name" value="bac_cardiolipin"/>
    <property type="match status" value="1"/>
</dbReference>
<dbReference type="PANTHER" id="PTHR21248">
    <property type="entry name" value="CARDIOLIPIN SYNTHASE"/>
    <property type="match status" value="1"/>
</dbReference>
<dbReference type="PANTHER" id="PTHR21248:SF22">
    <property type="entry name" value="PHOSPHOLIPASE D"/>
    <property type="match status" value="1"/>
</dbReference>
<dbReference type="Pfam" id="PF13091">
    <property type="entry name" value="PLDc_2"/>
    <property type="match status" value="2"/>
</dbReference>
<dbReference type="Pfam" id="PF13396">
    <property type="entry name" value="PLDc_N"/>
    <property type="match status" value="1"/>
</dbReference>
<dbReference type="SMART" id="SM00155">
    <property type="entry name" value="PLDc"/>
    <property type="match status" value="2"/>
</dbReference>
<dbReference type="SUPFAM" id="SSF56024">
    <property type="entry name" value="Phospholipase D/nuclease"/>
    <property type="match status" value="2"/>
</dbReference>
<dbReference type="PROSITE" id="PS50035">
    <property type="entry name" value="PLD"/>
    <property type="match status" value="2"/>
</dbReference>
<sequence>MTTVYTLVSWLAILGYWLLIAGVTLRILMKRRAVPSAMAWLLIIYILPLVGIIAYLAVGELHLGKRRAERARAMWPSTAKWLNDLKACKHIFAEENSSVAAPLFKLCERRQGIAGVKGNQLQLMTESDDVMQALIRDIQLARHNIEMVFYIWKPGGMADQVAESLMAAARRGIHCRLMLDSAGSVAFFRSPWPELMRNAGIEVVEALKVNLMRVFLRRMDLRQHRKMIMIDNYIAYTGSMNMVDPRYFKQDAGVGQWIDLMARMEGPIATAMGIIYSCDWEIETGKRILPPPPDVNIMPFEQASGHTIHTIASGPGFPEDLIHQALLTAAYSAREYLIMTTPYFVPSDDLFHAICTAAQRGVDVSIILPRKNDSMLVGWASRAFFTELLAAGVKIYQFEGGLLHTKSVLVDGELSLVGTVNLDMRSLWLNFEITLAIDDKGFGADLAAVQDDYISRSRLLDARLWLKRPLWQRVAERLFYFFSPLL</sequence>
<keyword id="KW-0997">Cell inner membrane</keyword>
<keyword id="KW-1003">Cell membrane</keyword>
<keyword id="KW-0444">Lipid biosynthesis</keyword>
<keyword id="KW-0443">Lipid metabolism</keyword>
<keyword id="KW-0472">Membrane</keyword>
<keyword id="KW-0594">Phospholipid biosynthesis</keyword>
<keyword id="KW-1208">Phospholipid metabolism</keyword>
<keyword id="KW-1185">Reference proteome</keyword>
<keyword id="KW-0677">Repeat</keyword>
<keyword id="KW-0808">Transferase</keyword>
<keyword id="KW-0812">Transmembrane</keyword>
<keyword id="KW-1133">Transmembrane helix</keyword>
<gene>
    <name evidence="1" type="primary">clsA</name>
    <name type="synonym">cls</name>
    <name type="ordered locus">SDY_1307</name>
</gene>
<comment type="function">
    <text evidence="1">Catalyzes the reversible phosphatidyl group transfer from one phosphatidylglycerol molecule to another to form cardiolipin (CL) (diphosphatidylglycerol) and glycerol.</text>
</comment>
<comment type="catalytic activity">
    <reaction evidence="1">
        <text>2 a 1,2-diacyl-sn-glycero-3-phospho-(1'-sn-glycerol) = a cardiolipin + glycerol</text>
        <dbReference type="Rhea" id="RHEA:31451"/>
        <dbReference type="ChEBI" id="CHEBI:17754"/>
        <dbReference type="ChEBI" id="CHEBI:62237"/>
        <dbReference type="ChEBI" id="CHEBI:64716"/>
    </reaction>
</comment>
<comment type="subcellular location">
    <subcellularLocation>
        <location evidence="1">Cell inner membrane</location>
        <topology evidence="1">Multi-pass membrane protein</topology>
    </subcellularLocation>
</comment>
<comment type="similarity">
    <text evidence="1">Belongs to the phospholipase D family. Cardiolipin synthase subfamily. ClsA sub-subfamily.</text>
</comment>
<accession>Q32GV1</accession>
<name>CLSA_SHIDS</name>
<feature type="chain" id="PRO_1000058494" description="Cardiolipin synthase A">
    <location>
        <begin position="1"/>
        <end position="486"/>
    </location>
</feature>
<feature type="transmembrane region" description="Helical" evidence="1">
    <location>
        <begin position="3"/>
        <end position="23"/>
    </location>
</feature>
<feature type="transmembrane region" description="Helical" evidence="1">
    <location>
        <begin position="38"/>
        <end position="58"/>
    </location>
</feature>
<feature type="domain" description="PLD phosphodiesterase 1" evidence="1">
    <location>
        <begin position="219"/>
        <end position="246"/>
    </location>
</feature>
<feature type="domain" description="PLD phosphodiesterase 2" evidence="1">
    <location>
        <begin position="399"/>
        <end position="426"/>
    </location>
</feature>
<feature type="active site" evidence="1">
    <location>
        <position position="224"/>
    </location>
</feature>
<feature type="active site" evidence="1">
    <location>
        <position position="226"/>
    </location>
</feature>
<feature type="active site" evidence="1">
    <location>
        <position position="231"/>
    </location>
</feature>
<feature type="active site" evidence="1">
    <location>
        <position position="404"/>
    </location>
</feature>
<feature type="active site" evidence="1">
    <location>
        <position position="406"/>
    </location>
</feature>
<feature type="active site" evidence="1">
    <location>
        <position position="411"/>
    </location>
</feature>
<evidence type="ECO:0000255" key="1">
    <source>
        <dbReference type="HAMAP-Rule" id="MF_00190"/>
    </source>
</evidence>
<organism>
    <name type="scientific">Shigella dysenteriae serotype 1 (strain Sd197)</name>
    <dbReference type="NCBI Taxonomy" id="300267"/>
    <lineage>
        <taxon>Bacteria</taxon>
        <taxon>Pseudomonadati</taxon>
        <taxon>Pseudomonadota</taxon>
        <taxon>Gammaproteobacteria</taxon>
        <taxon>Enterobacterales</taxon>
        <taxon>Enterobacteriaceae</taxon>
        <taxon>Shigella</taxon>
    </lineage>
</organism>